<comment type="function">
    <text evidence="1">Catalyzes the reduction of the glycolytic intermediate dihydroxyacetone phosphate (DHAP) to sn-glycerol 3-phosphate (G3P), the key precursor for phospholipid synthesis.</text>
</comment>
<comment type="catalytic activity">
    <reaction evidence="1">
        <text>sn-glycerol 3-phosphate + NAD(+) = dihydroxyacetone phosphate + NADH + H(+)</text>
        <dbReference type="Rhea" id="RHEA:11092"/>
        <dbReference type="ChEBI" id="CHEBI:15378"/>
        <dbReference type="ChEBI" id="CHEBI:57540"/>
        <dbReference type="ChEBI" id="CHEBI:57597"/>
        <dbReference type="ChEBI" id="CHEBI:57642"/>
        <dbReference type="ChEBI" id="CHEBI:57945"/>
        <dbReference type="EC" id="1.1.1.94"/>
    </reaction>
    <physiologicalReaction direction="right-to-left" evidence="1">
        <dbReference type="Rhea" id="RHEA:11094"/>
    </physiologicalReaction>
</comment>
<comment type="catalytic activity">
    <reaction evidence="1">
        <text>sn-glycerol 3-phosphate + NADP(+) = dihydroxyacetone phosphate + NADPH + H(+)</text>
        <dbReference type="Rhea" id="RHEA:11096"/>
        <dbReference type="ChEBI" id="CHEBI:15378"/>
        <dbReference type="ChEBI" id="CHEBI:57597"/>
        <dbReference type="ChEBI" id="CHEBI:57642"/>
        <dbReference type="ChEBI" id="CHEBI:57783"/>
        <dbReference type="ChEBI" id="CHEBI:58349"/>
        <dbReference type="EC" id="1.1.1.94"/>
    </reaction>
    <physiologicalReaction direction="right-to-left" evidence="1">
        <dbReference type="Rhea" id="RHEA:11098"/>
    </physiologicalReaction>
</comment>
<comment type="pathway">
    <text evidence="1">Membrane lipid metabolism; glycerophospholipid metabolism.</text>
</comment>
<comment type="subcellular location">
    <subcellularLocation>
        <location evidence="1">Cytoplasm</location>
    </subcellularLocation>
</comment>
<comment type="similarity">
    <text evidence="1">Belongs to the NAD-dependent glycerol-3-phosphate dehydrogenase family.</text>
</comment>
<comment type="sequence caution" evidence="2">
    <conflict type="erroneous initiation">
        <sequence resource="EMBL-CDS" id="ABC39225"/>
    </conflict>
</comment>
<dbReference type="EC" id="1.1.1.94" evidence="1"/>
<dbReference type="EMBL" id="CP000086">
    <property type="protein sequence ID" value="ABC39225.1"/>
    <property type="status" value="ALT_INIT"/>
    <property type="molecule type" value="Genomic_DNA"/>
</dbReference>
<dbReference type="RefSeq" id="WP_009893164.1">
    <property type="nucleotide sequence ID" value="NC_007651.1"/>
</dbReference>
<dbReference type="SMR" id="Q2T1H1"/>
<dbReference type="GeneID" id="45120183"/>
<dbReference type="KEGG" id="bte:BTH_I0420"/>
<dbReference type="HOGENOM" id="CLU_033449_0_2_4"/>
<dbReference type="UniPathway" id="UPA00940"/>
<dbReference type="Proteomes" id="UP000001930">
    <property type="component" value="Chromosome I"/>
</dbReference>
<dbReference type="GO" id="GO:0005829">
    <property type="term" value="C:cytosol"/>
    <property type="evidence" value="ECO:0007669"/>
    <property type="project" value="TreeGrafter"/>
</dbReference>
<dbReference type="GO" id="GO:0047952">
    <property type="term" value="F:glycerol-3-phosphate dehydrogenase [NAD(P)+] activity"/>
    <property type="evidence" value="ECO:0007669"/>
    <property type="project" value="UniProtKB-UniRule"/>
</dbReference>
<dbReference type="GO" id="GO:0051287">
    <property type="term" value="F:NAD binding"/>
    <property type="evidence" value="ECO:0007669"/>
    <property type="project" value="InterPro"/>
</dbReference>
<dbReference type="GO" id="GO:0005975">
    <property type="term" value="P:carbohydrate metabolic process"/>
    <property type="evidence" value="ECO:0007669"/>
    <property type="project" value="InterPro"/>
</dbReference>
<dbReference type="GO" id="GO:0046167">
    <property type="term" value="P:glycerol-3-phosphate biosynthetic process"/>
    <property type="evidence" value="ECO:0007669"/>
    <property type="project" value="UniProtKB-UniRule"/>
</dbReference>
<dbReference type="GO" id="GO:0046168">
    <property type="term" value="P:glycerol-3-phosphate catabolic process"/>
    <property type="evidence" value="ECO:0007669"/>
    <property type="project" value="InterPro"/>
</dbReference>
<dbReference type="GO" id="GO:0006650">
    <property type="term" value="P:glycerophospholipid metabolic process"/>
    <property type="evidence" value="ECO:0007669"/>
    <property type="project" value="UniProtKB-UniRule"/>
</dbReference>
<dbReference type="GO" id="GO:0008654">
    <property type="term" value="P:phospholipid biosynthetic process"/>
    <property type="evidence" value="ECO:0007669"/>
    <property type="project" value="UniProtKB-KW"/>
</dbReference>
<dbReference type="FunFam" id="1.10.1040.10:FF:000001">
    <property type="entry name" value="Glycerol-3-phosphate dehydrogenase [NAD(P)+]"/>
    <property type="match status" value="1"/>
</dbReference>
<dbReference type="FunFam" id="3.40.50.720:FF:000019">
    <property type="entry name" value="Glycerol-3-phosphate dehydrogenase [NAD(P)+]"/>
    <property type="match status" value="1"/>
</dbReference>
<dbReference type="Gene3D" id="1.10.1040.10">
    <property type="entry name" value="N-(1-d-carboxylethyl)-l-norvaline Dehydrogenase, domain 2"/>
    <property type="match status" value="1"/>
</dbReference>
<dbReference type="Gene3D" id="3.40.50.720">
    <property type="entry name" value="NAD(P)-binding Rossmann-like Domain"/>
    <property type="match status" value="1"/>
</dbReference>
<dbReference type="HAMAP" id="MF_00394">
    <property type="entry name" value="NAD_Glyc3P_dehydrog"/>
    <property type="match status" value="1"/>
</dbReference>
<dbReference type="InterPro" id="IPR008927">
    <property type="entry name" value="6-PGluconate_DH-like_C_sf"/>
</dbReference>
<dbReference type="InterPro" id="IPR013328">
    <property type="entry name" value="6PGD_dom2"/>
</dbReference>
<dbReference type="InterPro" id="IPR006168">
    <property type="entry name" value="G3P_DH_NAD-dep"/>
</dbReference>
<dbReference type="InterPro" id="IPR006109">
    <property type="entry name" value="G3P_DH_NAD-dep_C"/>
</dbReference>
<dbReference type="InterPro" id="IPR011128">
    <property type="entry name" value="G3P_DH_NAD-dep_N"/>
</dbReference>
<dbReference type="InterPro" id="IPR036291">
    <property type="entry name" value="NAD(P)-bd_dom_sf"/>
</dbReference>
<dbReference type="NCBIfam" id="NF000940">
    <property type="entry name" value="PRK00094.1-2"/>
    <property type="match status" value="1"/>
</dbReference>
<dbReference type="NCBIfam" id="NF000942">
    <property type="entry name" value="PRK00094.1-4"/>
    <property type="match status" value="1"/>
</dbReference>
<dbReference type="PANTHER" id="PTHR11728">
    <property type="entry name" value="GLYCEROL-3-PHOSPHATE DEHYDROGENASE"/>
    <property type="match status" value="1"/>
</dbReference>
<dbReference type="PANTHER" id="PTHR11728:SF1">
    <property type="entry name" value="GLYCEROL-3-PHOSPHATE DEHYDROGENASE [NAD(+)] 2, CHLOROPLASTIC"/>
    <property type="match status" value="1"/>
</dbReference>
<dbReference type="Pfam" id="PF07479">
    <property type="entry name" value="NAD_Gly3P_dh_C"/>
    <property type="match status" value="1"/>
</dbReference>
<dbReference type="Pfam" id="PF01210">
    <property type="entry name" value="NAD_Gly3P_dh_N"/>
    <property type="match status" value="1"/>
</dbReference>
<dbReference type="PIRSF" id="PIRSF000114">
    <property type="entry name" value="Glycerol-3-P_dh"/>
    <property type="match status" value="1"/>
</dbReference>
<dbReference type="PRINTS" id="PR00077">
    <property type="entry name" value="GPDHDRGNASE"/>
</dbReference>
<dbReference type="SUPFAM" id="SSF48179">
    <property type="entry name" value="6-phosphogluconate dehydrogenase C-terminal domain-like"/>
    <property type="match status" value="1"/>
</dbReference>
<dbReference type="SUPFAM" id="SSF51735">
    <property type="entry name" value="NAD(P)-binding Rossmann-fold domains"/>
    <property type="match status" value="1"/>
</dbReference>
<dbReference type="PROSITE" id="PS00957">
    <property type="entry name" value="NAD_G3PDH"/>
    <property type="match status" value="1"/>
</dbReference>
<organism>
    <name type="scientific">Burkholderia thailandensis (strain ATCC 700388 / DSM 13276 / CCUG 48851 / CIP 106301 / E264)</name>
    <dbReference type="NCBI Taxonomy" id="271848"/>
    <lineage>
        <taxon>Bacteria</taxon>
        <taxon>Pseudomonadati</taxon>
        <taxon>Pseudomonadota</taxon>
        <taxon>Betaproteobacteria</taxon>
        <taxon>Burkholderiales</taxon>
        <taxon>Burkholderiaceae</taxon>
        <taxon>Burkholderia</taxon>
        <taxon>pseudomallei group</taxon>
    </lineage>
</organism>
<sequence length="332" mass="34235">MKVAVLGAGAWGTALAAHLAARHDTLLWARDAALVAELAARRENVRYLDGVALPPALRYEADLTAALSHAQADDALCVIAAPVAGLRALCRAMRDAGRVPAHFVWVCKGFEADTRLLPHQMVAEELPDHASYGVLSGPSFAREVAQGLPVALTVASASAACRGRTLAAFHHGAMRIYTGDDVVGVEVGGAVKNVLAIATGIADGLGLGLNARAALVTRGLAEMSRLGVALGGRAETFTGLTGLGDLILTATGDLSRNRTVGLQLAAGRSLDDILAALGHVAEGVRCARAVLSIARERGVDMPITEAVCAVLFDGVAPRDAVSGLLRRDAKAE</sequence>
<name>GPDA_BURTA</name>
<accession>Q2T1H1</accession>
<gene>
    <name evidence="1" type="primary">gpsA</name>
    <name type="ordered locus">BTH_I0420</name>
</gene>
<protein>
    <recommendedName>
        <fullName evidence="1">Glycerol-3-phosphate dehydrogenase [NAD(P)+]</fullName>
        <ecNumber evidence="1">1.1.1.94</ecNumber>
    </recommendedName>
    <alternativeName>
        <fullName evidence="1">NAD(P)(+)-dependent glycerol-3-phosphate dehydrogenase</fullName>
    </alternativeName>
    <alternativeName>
        <fullName evidence="1">NAD(P)H-dependent dihydroxyacetone-phosphate reductase</fullName>
    </alternativeName>
</protein>
<keyword id="KW-0963">Cytoplasm</keyword>
<keyword id="KW-0444">Lipid biosynthesis</keyword>
<keyword id="KW-0443">Lipid metabolism</keyword>
<keyword id="KW-0520">NAD</keyword>
<keyword id="KW-0521">NADP</keyword>
<keyword id="KW-0547">Nucleotide-binding</keyword>
<keyword id="KW-0560">Oxidoreductase</keyword>
<keyword id="KW-0594">Phospholipid biosynthesis</keyword>
<keyword id="KW-1208">Phospholipid metabolism</keyword>
<proteinExistence type="inferred from homology"/>
<reference key="1">
    <citation type="journal article" date="2005" name="BMC Genomics">
        <title>Bacterial genome adaptation to niches: divergence of the potential virulence genes in three Burkholderia species of different survival strategies.</title>
        <authorList>
            <person name="Kim H.S."/>
            <person name="Schell M.A."/>
            <person name="Yu Y."/>
            <person name="Ulrich R.L."/>
            <person name="Sarria S.H."/>
            <person name="Nierman W.C."/>
            <person name="DeShazer D."/>
        </authorList>
    </citation>
    <scope>NUCLEOTIDE SEQUENCE [LARGE SCALE GENOMIC DNA]</scope>
    <source>
        <strain>ATCC 700388 / DSM 13276 / CCUG 48851 / CIP 106301 / E264</strain>
    </source>
</reference>
<evidence type="ECO:0000255" key="1">
    <source>
        <dbReference type="HAMAP-Rule" id="MF_00394"/>
    </source>
</evidence>
<evidence type="ECO:0000305" key="2"/>
<feature type="chain" id="PRO_0000255291" description="Glycerol-3-phosphate dehydrogenase [NAD(P)+]">
    <location>
        <begin position="1"/>
        <end position="332"/>
    </location>
</feature>
<feature type="active site" description="Proton acceptor" evidence="1">
    <location>
        <position position="192"/>
    </location>
</feature>
<feature type="binding site" evidence="1">
    <location>
        <position position="11"/>
    </location>
    <ligand>
        <name>NADPH</name>
        <dbReference type="ChEBI" id="CHEBI:57783"/>
    </ligand>
</feature>
<feature type="binding site" evidence="1">
    <location>
        <position position="30"/>
    </location>
    <ligand>
        <name>NADPH</name>
        <dbReference type="ChEBI" id="CHEBI:57783"/>
    </ligand>
</feature>
<feature type="binding site" evidence="1">
    <location>
        <position position="108"/>
    </location>
    <ligand>
        <name>NADPH</name>
        <dbReference type="ChEBI" id="CHEBI:57783"/>
    </ligand>
</feature>
<feature type="binding site" evidence="1">
    <location>
        <position position="108"/>
    </location>
    <ligand>
        <name>sn-glycerol 3-phosphate</name>
        <dbReference type="ChEBI" id="CHEBI:57597"/>
    </ligand>
</feature>
<feature type="binding site" evidence="1">
    <location>
        <position position="137"/>
    </location>
    <ligand>
        <name>sn-glycerol 3-phosphate</name>
        <dbReference type="ChEBI" id="CHEBI:57597"/>
    </ligand>
</feature>
<feature type="binding site" evidence="1">
    <location>
        <position position="139"/>
    </location>
    <ligand>
        <name>sn-glycerol 3-phosphate</name>
        <dbReference type="ChEBI" id="CHEBI:57597"/>
    </ligand>
</feature>
<feature type="binding site" evidence="1">
    <location>
        <position position="141"/>
    </location>
    <ligand>
        <name>NADPH</name>
        <dbReference type="ChEBI" id="CHEBI:57783"/>
    </ligand>
</feature>
<feature type="binding site" evidence="1">
    <location>
        <position position="192"/>
    </location>
    <ligand>
        <name>sn-glycerol 3-phosphate</name>
        <dbReference type="ChEBI" id="CHEBI:57597"/>
    </ligand>
</feature>
<feature type="binding site" evidence="1">
    <location>
        <position position="245"/>
    </location>
    <ligand>
        <name>sn-glycerol 3-phosphate</name>
        <dbReference type="ChEBI" id="CHEBI:57597"/>
    </ligand>
</feature>
<feature type="binding site" evidence="1">
    <location>
        <position position="255"/>
    </location>
    <ligand>
        <name>sn-glycerol 3-phosphate</name>
        <dbReference type="ChEBI" id="CHEBI:57597"/>
    </ligand>
</feature>
<feature type="binding site" evidence="1">
    <location>
        <position position="256"/>
    </location>
    <ligand>
        <name>NADPH</name>
        <dbReference type="ChEBI" id="CHEBI:57783"/>
    </ligand>
</feature>
<feature type="binding site" evidence="1">
    <location>
        <position position="256"/>
    </location>
    <ligand>
        <name>sn-glycerol 3-phosphate</name>
        <dbReference type="ChEBI" id="CHEBI:57597"/>
    </ligand>
</feature>
<feature type="binding site" evidence="1">
    <location>
        <position position="257"/>
    </location>
    <ligand>
        <name>sn-glycerol 3-phosphate</name>
        <dbReference type="ChEBI" id="CHEBI:57597"/>
    </ligand>
</feature>
<feature type="binding site" evidence="1">
    <location>
        <position position="280"/>
    </location>
    <ligand>
        <name>NADPH</name>
        <dbReference type="ChEBI" id="CHEBI:57783"/>
    </ligand>
</feature>
<feature type="binding site" evidence="1">
    <location>
        <position position="282"/>
    </location>
    <ligand>
        <name>NADPH</name>
        <dbReference type="ChEBI" id="CHEBI:57783"/>
    </ligand>
</feature>